<protein>
    <recommendedName>
        <fullName evidence="1">Large ribosomal subunit protein uL30</fullName>
    </recommendedName>
    <alternativeName>
        <fullName evidence="2">50S ribosomal protein L30</fullName>
    </alternativeName>
</protein>
<proteinExistence type="inferred from homology"/>
<accession>A7FQ39</accession>
<dbReference type="EMBL" id="CP000726">
    <property type="protein sequence ID" value="ABS34025.1"/>
    <property type="molecule type" value="Genomic_DNA"/>
</dbReference>
<dbReference type="RefSeq" id="WP_003357637.1">
    <property type="nucleotide sequence ID" value="NC_009697.1"/>
</dbReference>
<dbReference type="SMR" id="A7FQ39"/>
<dbReference type="GeneID" id="92940232"/>
<dbReference type="KEGG" id="cba:CLB_3519"/>
<dbReference type="HOGENOM" id="CLU_131047_2_1_9"/>
<dbReference type="GO" id="GO:0022625">
    <property type="term" value="C:cytosolic large ribosomal subunit"/>
    <property type="evidence" value="ECO:0007669"/>
    <property type="project" value="TreeGrafter"/>
</dbReference>
<dbReference type="GO" id="GO:0003735">
    <property type="term" value="F:structural constituent of ribosome"/>
    <property type="evidence" value="ECO:0007669"/>
    <property type="project" value="InterPro"/>
</dbReference>
<dbReference type="GO" id="GO:0006412">
    <property type="term" value="P:translation"/>
    <property type="evidence" value="ECO:0007669"/>
    <property type="project" value="UniProtKB-UniRule"/>
</dbReference>
<dbReference type="CDD" id="cd01658">
    <property type="entry name" value="Ribosomal_L30"/>
    <property type="match status" value="1"/>
</dbReference>
<dbReference type="FunFam" id="3.30.1390.20:FF:000001">
    <property type="entry name" value="50S ribosomal protein L30"/>
    <property type="match status" value="1"/>
</dbReference>
<dbReference type="Gene3D" id="3.30.1390.20">
    <property type="entry name" value="Ribosomal protein L30, ferredoxin-like fold domain"/>
    <property type="match status" value="1"/>
</dbReference>
<dbReference type="HAMAP" id="MF_01371_B">
    <property type="entry name" value="Ribosomal_uL30_B"/>
    <property type="match status" value="1"/>
</dbReference>
<dbReference type="InterPro" id="IPR036919">
    <property type="entry name" value="Ribo_uL30_ferredoxin-like_sf"/>
</dbReference>
<dbReference type="InterPro" id="IPR005996">
    <property type="entry name" value="Ribosomal_uL30_bac-type"/>
</dbReference>
<dbReference type="InterPro" id="IPR016082">
    <property type="entry name" value="Ribosomal_uL30_ferredoxin-like"/>
</dbReference>
<dbReference type="NCBIfam" id="TIGR01308">
    <property type="entry name" value="rpmD_bact"/>
    <property type="match status" value="1"/>
</dbReference>
<dbReference type="PANTHER" id="PTHR15892:SF2">
    <property type="entry name" value="LARGE RIBOSOMAL SUBUNIT PROTEIN UL30M"/>
    <property type="match status" value="1"/>
</dbReference>
<dbReference type="PANTHER" id="PTHR15892">
    <property type="entry name" value="MITOCHONDRIAL RIBOSOMAL PROTEIN L30"/>
    <property type="match status" value="1"/>
</dbReference>
<dbReference type="Pfam" id="PF00327">
    <property type="entry name" value="Ribosomal_L30"/>
    <property type="match status" value="1"/>
</dbReference>
<dbReference type="PIRSF" id="PIRSF002211">
    <property type="entry name" value="Ribosomal_L30_bac-type"/>
    <property type="match status" value="1"/>
</dbReference>
<dbReference type="SUPFAM" id="SSF55129">
    <property type="entry name" value="Ribosomal protein L30p/L7e"/>
    <property type="match status" value="1"/>
</dbReference>
<gene>
    <name evidence="1" type="primary">rpmD</name>
    <name type="ordered locus">CLB_3519</name>
</gene>
<feature type="chain" id="PRO_1000056028" description="Large ribosomal subunit protein uL30">
    <location>
        <begin position="1"/>
        <end position="59"/>
    </location>
</feature>
<comment type="subunit">
    <text evidence="1">Part of the 50S ribosomal subunit.</text>
</comment>
<comment type="similarity">
    <text evidence="1">Belongs to the universal ribosomal protein uL30 family.</text>
</comment>
<evidence type="ECO:0000255" key="1">
    <source>
        <dbReference type="HAMAP-Rule" id="MF_01371"/>
    </source>
</evidence>
<evidence type="ECO:0000305" key="2"/>
<keyword id="KW-0687">Ribonucleoprotein</keyword>
<keyword id="KW-0689">Ribosomal protein</keyword>
<name>RL30_CLOB1</name>
<reference key="1">
    <citation type="journal article" date="2007" name="PLoS ONE">
        <title>Analysis of the neurotoxin complex genes in Clostridium botulinum A1-A4 and B1 strains: BoNT/A3, /Ba4 and /B1 clusters are located within plasmids.</title>
        <authorList>
            <person name="Smith T.J."/>
            <person name="Hill K.K."/>
            <person name="Foley B.T."/>
            <person name="Detter J.C."/>
            <person name="Munk A.C."/>
            <person name="Bruce D.C."/>
            <person name="Doggett N.A."/>
            <person name="Smith L.A."/>
            <person name="Marks J.D."/>
            <person name="Xie G."/>
            <person name="Brettin T.S."/>
        </authorList>
    </citation>
    <scope>NUCLEOTIDE SEQUENCE [LARGE SCALE GENOMIC DNA]</scope>
    <source>
        <strain>ATCC 19397 / Type A</strain>
    </source>
</reference>
<sequence>MAKVKITLVKSLIGRKKDQIATVNALGLKKIGNIVEHEETPQISGMIKKVSYLLKVEEA</sequence>
<organism>
    <name type="scientific">Clostridium botulinum (strain ATCC 19397 / Type A)</name>
    <dbReference type="NCBI Taxonomy" id="441770"/>
    <lineage>
        <taxon>Bacteria</taxon>
        <taxon>Bacillati</taxon>
        <taxon>Bacillota</taxon>
        <taxon>Clostridia</taxon>
        <taxon>Eubacteriales</taxon>
        <taxon>Clostridiaceae</taxon>
        <taxon>Clostridium</taxon>
    </lineage>
</organism>